<feature type="chain" id="PRO_0000310229" description="Pre-mRNA-processing ATP-dependent RNA helicase PRP5">
    <location>
        <begin position="1"/>
        <end position="849"/>
    </location>
</feature>
<feature type="domain" description="Helicase ATP-binding" evidence="3">
    <location>
        <begin position="287"/>
        <end position="467"/>
    </location>
</feature>
<feature type="domain" description="Helicase C-terminal" evidence="4">
    <location>
        <begin position="502"/>
        <end position="661"/>
    </location>
</feature>
<feature type="region of interest" description="Disordered" evidence="5">
    <location>
        <begin position="28"/>
        <end position="138"/>
    </location>
</feature>
<feature type="region of interest" description="Disordered" evidence="5">
    <location>
        <begin position="689"/>
        <end position="731"/>
    </location>
</feature>
<feature type="coiled-coil region" evidence="2">
    <location>
        <begin position="13"/>
        <end position="81"/>
    </location>
</feature>
<feature type="short sequence motif" description="Q motif">
    <location>
        <begin position="255"/>
        <end position="284"/>
    </location>
</feature>
<feature type="short sequence motif" description="DEAD box">
    <location>
        <begin position="415"/>
        <end position="418"/>
    </location>
</feature>
<feature type="compositionally biased region" description="Polar residues" evidence="5">
    <location>
        <begin position="38"/>
        <end position="54"/>
    </location>
</feature>
<feature type="compositionally biased region" description="Basic and acidic residues" evidence="5">
    <location>
        <begin position="55"/>
        <end position="85"/>
    </location>
</feature>
<feature type="compositionally biased region" description="Basic residues" evidence="5">
    <location>
        <begin position="89"/>
        <end position="102"/>
    </location>
</feature>
<feature type="compositionally biased region" description="Basic and acidic residues" evidence="5">
    <location>
        <begin position="120"/>
        <end position="138"/>
    </location>
</feature>
<feature type="compositionally biased region" description="Basic and acidic residues" evidence="5">
    <location>
        <begin position="689"/>
        <end position="728"/>
    </location>
</feature>
<feature type="binding site" evidence="3">
    <location>
        <begin position="300"/>
        <end position="307"/>
    </location>
    <ligand>
        <name>ATP</name>
        <dbReference type="ChEBI" id="CHEBI:30616"/>
    </ligand>
</feature>
<protein>
    <recommendedName>
        <fullName>Pre-mRNA-processing ATP-dependent RNA helicase PRP5</fullName>
        <ecNumber>3.6.4.13</ecNumber>
    </recommendedName>
</protein>
<accession>A6ZLH6</accession>
<sequence>METIDSKQNINRESLLEERRKKLAKWKQKKAQFDAQKENQTSRNDIVTNSLEGKQTTEKFTERQERVKEELRKRKNEFRKSDEPVSVKPSKKKSKRSKVKKKISFDFSDDDDSEIGVSFRSKEHIQKVPEHDNEKDPLDEFMTSLKEEKMSNSKGMYDRGDILDVEDQLFELGGTDDEDVEDNTDNSNIAKIAKLKAKKRVKQIYYSPEELEPFQKNFYIESETVSSMSEMEVEELRLSLDNIKIKGTGCPKPVTKWSQLGLSTDTMVLITEKLHFGSLTPIQSQALPAIMSGRDVIGISKTGSGKTISYLLPLLRQVKAQRPLSKHETGPMGLILAPTRELALQIHEEVTKFTEADTSIRSVCCTGGSEMKKQITDLKRGTEIVVATPGRFIDILTLNDGKLLSTKRITFVVMDEADRLFDLGFEPQITQIMKTVRPDKQCVLFSATFPNKLRSFAVRVLHSPISITINSKGMVNENVKQKFRICHSEDEKFDNLVQLIHERSEFFDEVQSENDGQSSDVEEVDAKAIIFVSSQNICDFISKKLLNAGIVTCAIHAGKPYQERLMNLEKFKREKNSILLCTEVLSRGLNVPEVSLVIIYNAVKTFAQYVHTTGRTARGSRSGTAITLLLHDELSGAYILSKAMRDEEIKALDPLQAKELQEMSAKFESGMKKGKFRLSKGFGGKGLENIKSKREEAQNKDLELKKNDKRSDDLEKKINNPHEGHDSEPESSALIPRLNYELFKESTDGSIIFYAKVYINDLPQIVRWEATKNTTLLFIKHETGCSITNKGKFYPEGKEPKNENDEPKLYLLIEGQDEKDIQLSIELLEQKVKEGVVKAASLSLKSTKY</sequence>
<evidence type="ECO:0000250" key="1"/>
<evidence type="ECO:0000255" key="2"/>
<evidence type="ECO:0000255" key="3">
    <source>
        <dbReference type="PROSITE-ProRule" id="PRU00541"/>
    </source>
</evidence>
<evidence type="ECO:0000255" key="4">
    <source>
        <dbReference type="PROSITE-ProRule" id="PRU00542"/>
    </source>
</evidence>
<evidence type="ECO:0000256" key="5">
    <source>
        <dbReference type="SAM" id="MobiDB-lite"/>
    </source>
</evidence>
<evidence type="ECO:0000305" key="6"/>
<proteinExistence type="inferred from homology"/>
<name>PRP5_YEAS7</name>
<gene>
    <name type="primary">PRP5</name>
    <name type="synonym">RNA5</name>
    <name type="ORF">SCY_0446</name>
</gene>
<dbReference type="EC" id="3.6.4.13"/>
<dbReference type="EMBL" id="AAFW02000011">
    <property type="protein sequence ID" value="EDN64845.1"/>
    <property type="molecule type" value="Genomic_DNA"/>
</dbReference>
<dbReference type="SMR" id="A6ZLH6"/>
<dbReference type="HOGENOM" id="CLU_003041_0_2_1"/>
<dbReference type="Proteomes" id="UP000007060">
    <property type="component" value="Unassembled WGS sequence"/>
</dbReference>
<dbReference type="GO" id="GO:0005634">
    <property type="term" value="C:nucleus"/>
    <property type="evidence" value="ECO:0007669"/>
    <property type="project" value="UniProtKB-SubCell"/>
</dbReference>
<dbReference type="GO" id="GO:0005524">
    <property type="term" value="F:ATP binding"/>
    <property type="evidence" value="ECO:0007669"/>
    <property type="project" value="UniProtKB-KW"/>
</dbReference>
<dbReference type="GO" id="GO:0016887">
    <property type="term" value="F:ATP hydrolysis activity"/>
    <property type="evidence" value="ECO:0007669"/>
    <property type="project" value="RHEA"/>
</dbReference>
<dbReference type="GO" id="GO:0003676">
    <property type="term" value="F:nucleic acid binding"/>
    <property type="evidence" value="ECO:0007669"/>
    <property type="project" value="InterPro"/>
</dbReference>
<dbReference type="GO" id="GO:0003724">
    <property type="term" value="F:RNA helicase activity"/>
    <property type="evidence" value="ECO:0007669"/>
    <property type="project" value="UniProtKB-EC"/>
</dbReference>
<dbReference type="GO" id="GO:0006397">
    <property type="term" value="P:mRNA processing"/>
    <property type="evidence" value="ECO:0007669"/>
    <property type="project" value="UniProtKB-KW"/>
</dbReference>
<dbReference type="GO" id="GO:0008380">
    <property type="term" value="P:RNA splicing"/>
    <property type="evidence" value="ECO:0007669"/>
    <property type="project" value="UniProtKB-KW"/>
</dbReference>
<dbReference type="CDD" id="cd17953">
    <property type="entry name" value="DEADc_DDX46"/>
    <property type="match status" value="1"/>
</dbReference>
<dbReference type="CDD" id="cd22474">
    <property type="entry name" value="KH-I_PRP5_like"/>
    <property type="match status" value="1"/>
</dbReference>
<dbReference type="CDD" id="cd18787">
    <property type="entry name" value="SF2_C_DEAD"/>
    <property type="match status" value="1"/>
</dbReference>
<dbReference type="FunFam" id="3.40.50.300:FF:002547">
    <property type="entry name" value="Pre-mRNA-processing ATP-dependent RNA helicase PRP5"/>
    <property type="match status" value="1"/>
</dbReference>
<dbReference type="Gene3D" id="3.40.50.300">
    <property type="entry name" value="P-loop containing nucleotide triphosphate hydrolases"/>
    <property type="match status" value="2"/>
</dbReference>
<dbReference type="InterPro" id="IPR011545">
    <property type="entry name" value="DEAD/DEAH_box_helicase_dom"/>
</dbReference>
<dbReference type="InterPro" id="IPR014001">
    <property type="entry name" value="Helicase_ATP-bd"/>
</dbReference>
<dbReference type="InterPro" id="IPR001650">
    <property type="entry name" value="Helicase_C-like"/>
</dbReference>
<dbReference type="InterPro" id="IPR027417">
    <property type="entry name" value="P-loop_NTPase"/>
</dbReference>
<dbReference type="InterPro" id="IPR056149">
    <property type="entry name" value="PRP5/DDX46/KHDC4_KH"/>
</dbReference>
<dbReference type="InterPro" id="IPR000629">
    <property type="entry name" value="RNA-helicase_DEAD-box_CS"/>
</dbReference>
<dbReference type="InterPro" id="IPR014014">
    <property type="entry name" value="RNA_helicase_DEAD_Q_motif"/>
</dbReference>
<dbReference type="PANTHER" id="PTHR47958">
    <property type="entry name" value="ATP-DEPENDENT RNA HELICASE DBP3"/>
    <property type="match status" value="1"/>
</dbReference>
<dbReference type="Pfam" id="PF00270">
    <property type="entry name" value="DEAD"/>
    <property type="match status" value="1"/>
</dbReference>
<dbReference type="Pfam" id="PF00271">
    <property type="entry name" value="Helicase_C"/>
    <property type="match status" value="1"/>
</dbReference>
<dbReference type="Pfam" id="PF23469">
    <property type="entry name" value="KH_12"/>
    <property type="match status" value="1"/>
</dbReference>
<dbReference type="SMART" id="SM00487">
    <property type="entry name" value="DEXDc"/>
    <property type="match status" value="1"/>
</dbReference>
<dbReference type="SMART" id="SM00490">
    <property type="entry name" value="HELICc"/>
    <property type="match status" value="1"/>
</dbReference>
<dbReference type="SUPFAM" id="SSF52540">
    <property type="entry name" value="P-loop containing nucleoside triphosphate hydrolases"/>
    <property type="match status" value="2"/>
</dbReference>
<dbReference type="PROSITE" id="PS00039">
    <property type="entry name" value="DEAD_ATP_HELICASE"/>
    <property type="match status" value="1"/>
</dbReference>
<dbReference type="PROSITE" id="PS51192">
    <property type="entry name" value="HELICASE_ATP_BIND_1"/>
    <property type="match status" value="1"/>
</dbReference>
<dbReference type="PROSITE" id="PS51194">
    <property type="entry name" value="HELICASE_CTER"/>
    <property type="match status" value="1"/>
</dbReference>
<dbReference type="PROSITE" id="PS51195">
    <property type="entry name" value="Q_MOTIF"/>
    <property type="match status" value="1"/>
</dbReference>
<comment type="function">
    <text evidence="1">ATP-dependent RNA helicase involved spliceosome assembly and in nuclear splicing. Catalyzes an ATP-dependent conformational change of U2 snRNP. Bridges U1 and U2 snRNPs and enables stable U2 snRNP association with intron RNA (By similarity).</text>
</comment>
<comment type="catalytic activity">
    <reaction>
        <text>ATP + H2O = ADP + phosphate + H(+)</text>
        <dbReference type="Rhea" id="RHEA:13065"/>
        <dbReference type="ChEBI" id="CHEBI:15377"/>
        <dbReference type="ChEBI" id="CHEBI:15378"/>
        <dbReference type="ChEBI" id="CHEBI:30616"/>
        <dbReference type="ChEBI" id="CHEBI:43474"/>
        <dbReference type="ChEBI" id="CHEBI:456216"/>
        <dbReference type="EC" id="3.6.4.13"/>
    </reaction>
</comment>
<comment type="subunit">
    <text evidence="1">Interacts with the U2 snRNP and HSH155.</text>
</comment>
<comment type="subcellular location">
    <subcellularLocation>
        <location evidence="1">Nucleus</location>
    </subcellularLocation>
</comment>
<comment type="domain">
    <text>The Q motif is unique to and characteristic of the DEAD box family of RNA helicases and controls ATP binding and hydrolysis.</text>
</comment>
<comment type="similarity">
    <text evidence="6">Belongs to the DEAD box helicase family. DDX46/PRP5 subfamily.</text>
</comment>
<reference key="1">
    <citation type="journal article" date="2007" name="Proc. Natl. Acad. Sci. U.S.A.">
        <title>Genome sequencing and comparative analysis of Saccharomyces cerevisiae strain YJM789.</title>
        <authorList>
            <person name="Wei W."/>
            <person name="McCusker J.H."/>
            <person name="Hyman R.W."/>
            <person name="Jones T."/>
            <person name="Ning Y."/>
            <person name="Cao Z."/>
            <person name="Gu Z."/>
            <person name="Bruno D."/>
            <person name="Miranda M."/>
            <person name="Nguyen M."/>
            <person name="Wilhelmy J."/>
            <person name="Komp C."/>
            <person name="Tamse R."/>
            <person name="Wang X."/>
            <person name="Jia P."/>
            <person name="Luedi P."/>
            <person name="Oefner P.J."/>
            <person name="David L."/>
            <person name="Dietrich F.S."/>
            <person name="Li Y."/>
            <person name="Davis R.W."/>
            <person name="Steinmetz L.M."/>
        </authorList>
    </citation>
    <scope>NUCLEOTIDE SEQUENCE [LARGE SCALE GENOMIC DNA]</scope>
    <source>
        <strain>YJM789</strain>
    </source>
</reference>
<organism>
    <name type="scientific">Saccharomyces cerevisiae (strain YJM789)</name>
    <name type="common">Baker's yeast</name>
    <dbReference type="NCBI Taxonomy" id="307796"/>
    <lineage>
        <taxon>Eukaryota</taxon>
        <taxon>Fungi</taxon>
        <taxon>Dikarya</taxon>
        <taxon>Ascomycota</taxon>
        <taxon>Saccharomycotina</taxon>
        <taxon>Saccharomycetes</taxon>
        <taxon>Saccharomycetales</taxon>
        <taxon>Saccharomycetaceae</taxon>
        <taxon>Saccharomyces</taxon>
    </lineage>
</organism>
<keyword id="KW-0067">ATP-binding</keyword>
<keyword id="KW-0175">Coiled coil</keyword>
<keyword id="KW-0347">Helicase</keyword>
<keyword id="KW-0378">Hydrolase</keyword>
<keyword id="KW-0507">mRNA processing</keyword>
<keyword id="KW-0508">mRNA splicing</keyword>
<keyword id="KW-0547">Nucleotide-binding</keyword>
<keyword id="KW-0539">Nucleus</keyword>